<proteinExistence type="inferred from homology"/>
<feature type="chain" id="PRO_0000406768" description="Flagellar transcriptional regulator FlhC">
    <location>
        <begin position="1"/>
        <end position="184"/>
    </location>
</feature>
<feature type="binding site" evidence="1">
    <location>
        <position position="144"/>
    </location>
    <ligand>
        <name>Zn(2+)</name>
        <dbReference type="ChEBI" id="CHEBI:29105"/>
    </ligand>
</feature>
<feature type="binding site" evidence="1">
    <location>
        <position position="147"/>
    </location>
    <ligand>
        <name>Zn(2+)</name>
        <dbReference type="ChEBI" id="CHEBI:29105"/>
    </ligand>
</feature>
<feature type="binding site" evidence="1">
    <location>
        <position position="163"/>
    </location>
    <ligand>
        <name>Zn(2+)</name>
        <dbReference type="ChEBI" id="CHEBI:29105"/>
    </ligand>
</feature>
<feature type="binding site" evidence="1">
    <location>
        <position position="166"/>
    </location>
    <ligand>
        <name>Zn(2+)</name>
        <dbReference type="ChEBI" id="CHEBI:29105"/>
    </ligand>
</feature>
<sequence length="184" mass="20918">MSTNVAKARVKSVLNESRQIERAAVLIRMGARMQVLESETTLSYERLIRLYKEIAGKSPSKGQLPFSTDWFLTWQENIHSSLFLNIYEYLSKGLDLDAVELLIRAYRLYDEQVTTTAIAPLLSFTRAWRLVKFVDAGMLTRTRCARCGGQFVTELYESRHFICGLCHPPARAGKSRVAGALMLH</sequence>
<evidence type="ECO:0000255" key="1">
    <source>
        <dbReference type="HAMAP-Rule" id="MF_01891"/>
    </source>
</evidence>
<comment type="function">
    <text evidence="1">Functions in complex with FlhD as a master transcriptional regulator that regulates transcription of several flagellar and non-flagellar operons by binding to their promoter region. Activates expression of class 2 flagellar genes, including fliA, which is a flagellum-specific sigma factor that turns on the class 3 genes. Also regulates genes whose products function in a variety of physiological pathways.</text>
</comment>
<comment type="cofactor">
    <cofactor evidence="1">
        <name>Zn(2+)</name>
        <dbReference type="ChEBI" id="CHEBI:29105"/>
    </cofactor>
    <text evidence="1">Binds 1 zinc ion per subunit.</text>
</comment>
<comment type="subunit">
    <text evidence="1">Heterohexamer composed of two FlhC and four FlhD subunits. Each FlhC binds a FlhD dimer, forming a heterotrimer, and a hexamer assembles by dimerization of two heterotrimers.</text>
</comment>
<comment type="subcellular location">
    <subcellularLocation>
        <location evidence="1">Cytoplasm</location>
    </subcellularLocation>
</comment>
<comment type="similarity">
    <text evidence="1">Belongs to the FlhC family.</text>
</comment>
<keyword id="KW-0010">Activator</keyword>
<keyword id="KW-1005">Bacterial flagellum biogenesis</keyword>
<keyword id="KW-0963">Cytoplasm</keyword>
<keyword id="KW-0238">DNA-binding</keyword>
<keyword id="KW-0479">Metal-binding</keyword>
<keyword id="KW-1185">Reference proteome</keyword>
<keyword id="KW-0804">Transcription</keyword>
<keyword id="KW-0805">Transcription regulation</keyword>
<keyword id="KW-0862">Zinc</keyword>
<reference key="1">
    <citation type="submission" date="2006-12" db="EMBL/GenBank/DDBJ databases">
        <title>Complete sequence of chromosome 1 of Verminephrobacter eiseniae EF01-2.</title>
        <authorList>
            <person name="Copeland A."/>
            <person name="Lucas S."/>
            <person name="Lapidus A."/>
            <person name="Barry K."/>
            <person name="Detter J.C."/>
            <person name="Glavina del Rio T."/>
            <person name="Dalin E."/>
            <person name="Tice H."/>
            <person name="Pitluck S."/>
            <person name="Chertkov O."/>
            <person name="Brettin T."/>
            <person name="Bruce D."/>
            <person name="Han C."/>
            <person name="Tapia R."/>
            <person name="Gilna P."/>
            <person name="Schmutz J."/>
            <person name="Larimer F."/>
            <person name="Land M."/>
            <person name="Hauser L."/>
            <person name="Kyrpides N."/>
            <person name="Kim E."/>
            <person name="Stahl D."/>
            <person name="Richardson P."/>
        </authorList>
    </citation>
    <scope>NUCLEOTIDE SEQUENCE [LARGE SCALE GENOMIC DNA]</scope>
    <source>
        <strain>EF01-2</strain>
    </source>
</reference>
<dbReference type="EMBL" id="CP000542">
    <property type="protein sequence ID" value="ABM57612.1"/>
    <property type="molecule type" value="Genomic_DNA"/>
</dbReference>
<dbReference type="RefSeq" id="WP_011809618.1">
    <property type="nucleotide sequence ID" value="NC_008786.1"/>
</dbReference>
<dbReference type="SMR" id="A1WJ05"/>
<dbReference type="STRING" id="391735.Veis_1859"/>
<dbReference type="GeneID" id="76460462"/>
<dbReference type="KEGG" id="vei:Veis_1859"/>
<dbReference type="eggNOG" id="ENOG502Z927">
    <property type="taxonomic scope" value="Bacteria"/>
</dbReference>
<dbReference type="HOGENOM" id="CLU_122824_0_0_4"/>
<dbReference type="OrthoDB" id="5570801at2"/>
<dbReference type="Proteomes" id="UP000000374">
    <property type="component" value="Chromosome"/>
</dbReference>
<dbReference type="GO" id="GO:0005737">
    <property type="term" value="C:cytoplasm"/>
    <property type="evidence" value="ECO:0007669"/>
    <property type="project" value="UniProtKB-SubCell"/>
</dbReference>
<dbReference type="GO" id="GO:0003677">
    <property type="term" value="F:DNA binding"/>
    <property type="evidence" value="ECO:0007669"/>
    <property type="project" value="UniProtKB-UniRule"/>
</dbReference>
<dbReference type="GO" id="GO:0008270">
    <property type="term" value="F:zinc ion binding"/>
    <property type="evidence" value="ECO:0007669"/>
    <property type="project" value="UniProtKB-UniRule"/>
</dbReference>
<dbReference type="GO" id="GO:0044781">
    <property type="term" value="P:bacterial-type flagellum organization"/>
    <property type="evidence" value="ECO:0007669"/>
    <property type="project" value="UniProtKB-KW"/>
</dbReference>
<dbReference type="GO" id="GO:0045893">
    <property type="term" value="P:positive regulation of DNA-templated transcription"/>
    <property type="evidence" value="ECO:0007669"/>
    <property type="project" value="InterPro"/>
</dbReference>
<dbReference type="GO" id="GO:1902208">
    <property type="term" value="P:regulation of bacterial-type flagellum assembly"/>
    <property type="evidence" value="ECO:0007669"/>
    <property type="project" value="UniProtKB-UniRule"/>
</dbReference>
<dbReference type="HAMAP" id="MF_01891">
    <property type="entry name" value="FhlC"/>
    <property type="match status" value="1"/>
</dbReference>
<dbReference type="InterPro" id="IPR007944">
    <property type="entry name" value="FlhC"/>
</dbReference>
<dbReference type="NCBIfam" id="NF009365">
    <property type="entry name" value="PRK12722.1"/>
    <property type="match status" value="1"/>
</dbReference>
<dbReference type="Pfam" id="PF05280">
    <property type="entry name" value="FlhC"/>
    <property type="match status" value="1"/>
</dbReference>
<dbReference type="PIRSF" id="PIRSF003159">
    <property type="entry name" value="FlhC"/>
    <property type="match status" value="1"/>
</dbReference>
<dbReference type="SUPFAM" id="SSF160930">
    <property type="entry name" value="FlhC-like"/>
    <property type="match status" value="1"/>
</dbReference>
<organism>
    <name type="scientific">Verminephrobacter eiseniae (strain EF01-2)</name>
    <dbReference type="NCBI Taxonomy" id="391735"/>
    <lineage>
        <taxon>Bacteria</taxon>
        <taxon>Pseudomonadati</taxon>
        <taxon>Pseudomonadota</taxon>
        <taxon>Betaproteobacteria</taxon>
        <taxon>Burkholderiales</taxon>
        <taxon>Comamonadaceae</taxon>
        <taxon>Verminephrobacter</taxon>
    </lineage>
</organism>
<protein>
    <recommendedName>
        <fullName evidence="1">Flagellar transcriptional regulator FlhC</fullName>
    </recommendedName>
</protein>
<gene>
    <name evidence="1" type="primary">flhC</name>
    <name type="ordered locus">Veis_1859</name>
</gene>
<accession>A1WJ05</accession>
<name>FLHC_VEREI</name>